<proteinExistence type="inferred from homology"/>
<protein>
    <recommendedName>
        <fullName evidence="1">GTPase Obg</fullName>
        <ecNumber evidence="1">3.6.5.-</ecNumber>
    </recommendedName>
    <alternativeName>
        <fullName evidence="1">GTP-binding protein Obg</fullName>
    </alternativeName>
</protein>
<dbReference type="EC" id="3.6.5.-" evidence="1"/>
<dbReference type="EMBL" id="CP000036">
    <property type="protein sequence ID" value="ABB67698.1"/>
    <property type="molecule type" value="Genomic_DNA"/>
</dbReference>
<dbReference type="SMR" id="Q31W60"/>
<dbReference type="KEGG" id="sbo:SBO_3199"/>
<dbReference type="HOGENOM" id="CLU_011747_2_0_6"/>
<dbReference type="Proteomes" id="UP000007067">
    <property type="component" value="Chromosome"/>
</dbReference>
<dbReference type="GO" id="GO:0005737">
    <property type="term" value="C:cytoplasm"/>
    <property type="evidence" value="ECO:0007669"/>
    <property type="project" value="UniProtKB-SubCell"/>
</dbReference>
<dbReference type="GO" id="GO:0005525">
    <property type="term" value="F:GTP binding"/>
    <property type="evidence" value="ECO:0007669"/>
    <property type="project" value="UniProtKB-UniRule"/>
</dbReference>
<dbReference type="GO" id="GO:0003924">
    <property type="term" value="F:GTPase activity"/>
    <property type="evidence" value="ECO:0007669"/>
    <property type="project" value="UniProtKB-UniRule"/>
</dbReference>
<dbReference type="GO" id="GO:0000287">
    <property type="term" value="F:magnesium ion binding"/>
    <property type="evidence" value="ECO:0007669"/>
    <property type="project" value="InterPro"/>
</dbReference>
<dbReference type="GO" id="GO:0042254">
    <property type="term" value="P:ribosome biogenesis"/>
    <property type="evidence" value="ECO:0007669"/>
    <property type="project" value="UniProtKB-UniRule"/>
</dbReference>
<dbReference type="CDD" id="cd01898">
    <property type="entry name" value="Obg"/>
    <property type="match status" value="1"/>
</dbReference>
<dbReference type="FunFam" id="2.70.210.12:FF:000001">
    <property type="entry name" value="GTPase Obg"/>
    <property type="match status" value="1"/>
</dbReference>
<dbReference type="FunFam" id="3.40.50.300:FF:000185">
    <property type="entry name" value="GTPase Obg"/>
    <property type="match status" value="1"/>
</dbReference>
<dbReference type="Gene3D" id="2.70.210.12">
    <property type="entry name" value="GTP1/OBG domain"/>
    <property type="match status" value="1"/>
</dbReference>
<dbReference type="Gene3D" id="3.40.50.300">
    <property type="entry name" value="P-loop containing nucleotide triphosphate hydrolases"/>
    <property type="match status" value="1"/>
</dbReference>
<dbReference type="HAMAP" id="MF_01454">
    <property type="entry name" value="GTPase_Obg"/>
    <property type="match status" value="1"/>
</dbReference>
<dbReference type="InterPro" id="IPR031167">
    <property type="entry name" value="G_OBG"/>
</dbReference>
<dbReference type="InterPro" id="IPR006073">
    <property type="entry name" value="GTP-bd"/>
</dbReference>
<dbReference type="InterPro" id="IPR014100">
    <property type="entry name" value="GTP-bd_Obg/CgtA"/>
</dbReference>
<dbReference type="InterPro" id="IPR006074">
    <property type="entry name" value="GTP1-OBG_CS"/>
</dbReference>
<dbReference type="InterPro" id="IPR006169">
    <property type="entry name" value="GTP1_OBG_dom"/>
</dbReference>
<dbReference type="InterPro" id="IPR036726">
    <property type="entry name" value="GTP1_OBG_dom_sf"/>
</dbReference>
<dbReference type="InterPro" id="IPR045086">
    <property type="entry name" value="OBG_GTPase"/>
</dbReference>
<dbReference type="InterPro" id="IPR027417">
    <property type="entry name" value="P-loop_NTPase"/>
</dbReference>
<dbReference type="NCBIfam" id="TIGR02729">
    <property type="entry name" value="Obg_CgtA"/>
    <property type="match status" value="1"/>
</dbReference>
<dbReference type="NCBIfam" id="NF008955">
    <property type="entry name" value="PRK12297.1"/>
    <property type="match status" value="1"/>
</dbReference>
<dbReference type="NCBIfam" id="NF008956">
    <property type="entry name" value="PRK12299.1"/>
    <property type="match status" value="1"/>
</dbReference>
<dbReference type="PANTHER" id="PTHR11702">
    <property type="entry name" value="DEVELOPMENTALLY REGULATED GTP-BINDING PROTEIN-RELATED"/>
    <property type="match status" value="1"/>
</dbReference>
<dbReference type="PANTHER" id="PTHR11702:SF31">
    <property type="entry name" value="MITOCHONDRIAL RIBOSOME-ASSOCIATED GTPASE 2"/>
    <property type="match status" value="1"/>
</dbReference>
<dbReference type="Pfam" id="PF01018">
    <property type="entry name" value="GTP1_OBG"/>
    <property type="match status" value="1"/>
</dbReference>
<dbReference type="Pfam" id="PF01926">
    <property type="entry name" value="MMR_HSR1"/>
    <property type="match status" value="1"/>
</dbReference>
<dbReference type="PIRSF" id="PIRSF002401">
    <property type="entry name" value="GTP_bd_Obg/CgtA"/>
    <property type="match status" value="1"/>
</dbReference>
<dbReference type="PRINTS" id="PR00326">
    <property type="entry name" value="GTP1OBG"/>
</dbReference>
<dbReference type="SUPFAM" id="SSF82051">
    <property type="entry name" value="Obg GTP-binding protein N-terminal domain"/>
    <property type="match status" value="1"/>
</dbReference>
<dbReference type="SUPFAM" id="SSF52540">
    <property type="entry name" value="P-loop containing nucleoside triphosphate hydrolases"/>
    <property type="match status" value="1"/>
</dbReference>
<dbReference type="PROSITE" id="PS51710">
    <property type="entry name" value="G_OBG"/>
    <property type="match status" value="1"/>
</dbReference>
<dbReference type="PROSITE" id="PS00905">
    <property type="entry name" value="GTP1_OBG"/>
    <property type="match status" value="1"/>
</dbReference>
<dbReference type="PROSITE" id="PS51883">
    <property type="entry name" value="OBG"/>
    <property type="match status" value="1"/>
</dbReference>
<name>OBG_SHIBS</name>
<organism>
    <name type="scientific">Shigella boydii serotype 4 (strain Sb227)</name>
    <dbReference type="NCBI Taxonomy" id="300268"/>
    <lineage>
        <taxon>Bacteria</taxon>
        <taxon>Pseudomonadati</taxon>
        <taxon>Pseudomonadota</taxon>
        <taxon>Gammaproteobacteria</taxon>
        <taxon>Enterobacterales</taxon>
        <taxon>Enterobacteriaceae</taxon>
        <taxon>Shigella</taxon>
    </lineage>
</organism>
<sequence length="390" mass="43228">MKFVDEASILVVAGDGGNGCVSFRREKYIPKGGPDGGDGGDGGDVWMEADENLNTLIDYRFEKSFRAERGQNGASRDCTGKRGKDVTIKVPVGTRVIDQGTGETMGDMTKHGQRLLVAKGGWHGLGNTRFKSSVNRTPRQKTNGTPGDKRELLLELMLLADVGMLGMPNAGKSTFIRAVSAAKPKVADYPFTTLVPSLGVVRMDNEKSFVVADIPGLIEGAAEGAGLGIRFLKHLERCRVLLHLIDIDPIDGTDPVENARIIISELEKYSQDLAAKPRWLVFNKIDLLDKAEAEEKAKAIAEALGWEDKYYLISAASGLGVKDLCWDVMTFIIENPVVQAEEAKQPEKVEFMWDDYHRQQLEEIAEEDDEDWDDDWDEDDEEGVEFIYKR</sequence>
<reference key="1">
    <citation type="journal article" date="2005" name="Nucleic Acids Res.">
        <title>Genome dynamics and diversity of Shigella species, the etiologic agents of bacillary dysentery.</title>
        <authorList>
            <person name="Yang F."/>
            <person name="Yang J."/>
            <person name="Zhang X."/>
            <person name="Chen L."/>
            <person name="Jiang Y."/>
            <person name="Yan Y."/>
            <person name="Tang X."/>
            <person name="Wang J."/>
            <person name="Xiong Z."/>
            <person name="Dong J."/>
            <person name="Xue Y."/>
            <person name="Zhu Y."/>
            <person name="Xu X."/>
            <person name="Sun L."/>
            <person name="Chen S."/>
            <person name="Nie H."/>
            <person name="Peng J."/>
            <person name="Xu J."/>
            <person name="Wang Y."/>
            <person name="Yuan Z."/>
            <person name="Wen Y."/>
            <person name="Yao Z."/>
            <person name="Shen Y."/>
            <person name="Qiang B."/>
            <person name="Hou Y."/>
            <person name="Yu J."/>
            <person name="Jin Q."/>
        </authorList>
    </citation>
    <scope>NUCLEOTIDE SEQUENCE [LARGE SCALE GENOMIC DNA]</scope>
    <source>
        <strain>Sb227</strain>
    </source>
</reference>
<accession>Q31W60</accession>
<evidence type="ECO:0000255" key="1">
    <source>
        <dbReference type="HAMAP-Rule" id="MF_01454"/>
    </source>
</evidence>
<evidence type="ECO:0000255" key="2">
    <source>
        <dbReference type="PROSITE-ProRule" id="PRU01231"/>
    </source>
</evidence>
<evidence type="ECO:0000256" key="3">
    <source>
        <dbReference type="SAM" id="MobiDB-lite"/>
    </source>
</evidence>
<keyword id="KW-0963">Cytoplasm</keyword>
<keyword id="KW-0342">GTP-binding</keyword>
<keyword id="KW-0378">Hydrolase</keyword>
<keyword id="KW-0460">Magnesium</keyword>
<keyword id="KW-0479">Metal-binding</keyword>
<keyword id="KW-0547">Nucleotide-binding</keyword>
<feature type="chain" id="PRO_0000386255" description="GTPase Obg">
    <location>
        <begin position="1"/>
        <end position="390"/>
    </location>
</feature>
<feature type="domain" description="Obg" evidence="2">
    <location>
        <begin position="1"/>
        <end position="159"/>
    </location>
</feature>
<feature type="domain" description="OBG-type G" evidence="1">
    <location>
        <begin position="160"/>
        <end position="333"/>
    </location>
</feature>
<feature type="region of interest" description="Disordered" evidence="3">
    <location>
        <begin position="127"/>
        <end position="147"/>
    </location>
</feature>
<feature type="compositionally biased region" description="Polar residues" evidence="3">
    <location>
        <begin position="129"/>
        <end position="145"/>
    </location>
</feature>
<feature type="binding site" evidence="1">
    <location>
        <begin position="166"/>
        <end position="173"/>
    </location>
    <ligand>
        <name>GTP</name>
        <dbReference type="ChEBI" id="CHEBI:37565"/>
    </ligand>
</feature>
<feature type="binding site" evidence="1">
    <location>
        <position position="173"/>
    </location>
    <ligand>
        <name>Mg(2+)</name>
        <dbReference type="ChEBI" id="CHEBI:18420"/>
    </ligand>
</feature>
<feature type="binding site" evidence="1">
    <location>
        <begin position="191"/>
        <end position="195"/>
    </location>
    <ligand>
        <name>GTP</name>
        <dbReference type="ChEBI" id="CHEBI:37565"/>
    </ligand>
</feature>
<feature type="binding site" evidence="1">
    <location>
        <position position="193"/>
    </location>
    <ligand>
        <name>Mg(2+)</name>
        <dbReference type="ChEBI" id="CHEBI:18420"/>
    </ligand>
</feature>
<feature type="binding site" evidence="1">
    <location>
        <begin position="213"/>
        <end position="216"/>
    </location>
    <ligand>
        <name>GTP</name>
        <dbReference type="ChEBI" id="CHEBI:37565"/>
    </ligand>
</feature>
<feature type="binding site" evidence="1">
    <location>
        <begin position="283"/>
        <end position="286"/>
    </location>
    <ligand>
        <name>GTP</name>
        <dbReference type="ChEBI" id="CHEBI:37565"/>
    </ligand>
</feature>
<feature type="binding site" evidence="1">
    <location>
        <begin position="314"/>
        <end position="316"/>
    </location>
    <ligand>
        <name>GTP</name>
        <dbReference type="ChEBI" id="CHEBI:37565"/>
    </ligand>
</feature>
<gene>
    <name evidence="1" type="primary">obg</name>
    <name type="ordered locus">SBO_3199</name>
</gene>
<comment type="function">
    <text evidence="1">An essential GTPase which binds GTP, GDP and possibly (p)ppGpp with moderate affinity, with high nucleotide exchange rates and a fairly low GTP hydrolysis rate. Plays a role in control of the cell cycle, stress response, ribosome biogenesis and in those bacteria that undergo differentiation, in morphogenesis control.</text>
</comment>
<comment type="cofactor">
    <cofactor evidence="1">
        <name>Mg(2+)</name>
        <dbReference type="ChEBI" id="CHEBI:18420"/>
    </cofactor>
</comment>
<comment type="subunit">
    <text evidence="1">Monomer.</text>
</comment>
<comment type="subcellular location">
    <subcellularLocation>
        <location evidence="1">Cytoplasm</location>
    </subcellularLocation>
</comment>
<comment type="similarity">
    <text evidence="1">Belongs to the TRAFAC class OBG-HflX-like GTPase superfamily. OBG GTPase family.</text>
</comment>